<evidence type="ECO:0000255" key="1">
    <source>
        <dbReference type="HAMAP-Rule" id="MF_01216"/>
    </source>
</evidence>
<protein>
    <recommendedName>
        <fullName evidence="1">FMN-dependent NADH:quinone oxidoreductase</fullName>
        <ecNumber evidence="1">1.6.5.-</ecNumber>
    </recommendedName>
    <alternativeName>
        <fullName evidence="1">Azo-dye reductase</fullName>
    </alternativeName>
    <alternativeName>
        <fullName evidence="1">FMN-dependent NADH-azo compound oxidoreductase</fullName>
    </alternativeName>
    <alternativeName>
        <fullName evidence="1">FMN-dependent NADH-azoreductase</fullName>
        <ecNumber evidence="1">1.7.1.17</ecNumber>
    </alternativeName>
</protein>
<organism>
    <name type="scientific">Escherichia coli (strain UTI89 / UPEC)</name>
    <dbReference type="NCBI Taxonomy" id="364106"/>
    <lineage>
        <taxon>Bacteria</taxon>
        <taxon>Pseudomonadati</taxon>
        <taxon>Pseudomonadota</taxon>
        <taxon>Gammaproteobacteria</taxon>
        <taxon>Enterobacterales</taxon>
        <taxon>Enterobacteriaceae</taxon>
        <taxon>Escherichia</taxon>
    </lineage>
</organism>
<keyword id="KW-0285">Flavoprotein</keyword>
<keyword id="KW-0288">FMN</keyword>
<keyword id="KW-0520">NAD</keyword>
<keyword id="KW-0560">Oxidoreductase</keyword>
<comment type="function">
    <text evidence="1">Quinone reductase that provides resistance to thiol-specific stress caused by electrophilic quinones.</text>
</comment>
<comment type="function">
    <text evidence="1">Also exhibits azoreductase activity. Catalyzes the reductive cleavage of the azo bond in aromatic azo compounds to the corresponding amines.</text>
</comment>
<comment type="catalytic activity">
    <reaction evidence="1">
        <text>2 a quinone + NADH + H(+) = 2 a 1,4-benzosemiquinone + NAD(+)</text>
        <dbReference type="Rhea" id="RHEA:65952"/>
        <dbReference type="ChEBI" id="CHEBI:15378"/>
        <dbReference type="ChEBI" id="CHEBI:57540"/>
        <dbReference type="ChEBI" id="CHEBI:57945"/>
        <dbReference type="ChEBI" id="CHEBI:132124"/>
        <dbReference type="ChEBI" id="CHEBI:134225"/>
    </reaction>
</comment>
<comment type="catalytic activity">
    <reaction evidence="1">
        <text>N,N-dimethyl-1,4-phenylenediamine + anthranilate + 2 NAD(+) = 2-(4-dimethylaminophenyl)diazenylbenzoate + 2 NADH + 2 H(+)</text>
        <dbReference type="Rhea" id="RHEA:55872"/>
        <dbReference type="ChEBI" id="CHEBI:15378"/>
        <dbReference type="ChEBI" id="CHEBI:15783"/>
        <dbReference type="ChEBI" id="CHEBI:16567"/>
        <dbReference type="ChEBI" id="CHEBI:57540"/>
        <dbReference type="ChEBI" id="CHEBI:57945"/>
        <dbReference type="ChEBI" id="CHEBI:71579"/>
        <dbReference type="EC" id="1.7.1.17"/>
    </reaction>
</comment>
<comment type="cofactor">
    <cofactor evidence="1">
        <name>FMN</name>
        <dbReference type="ChEBI" id="CHEBI:58210"/>
    </cofactor>
    <text evidence="1">Binds 1 FMN per subunit.</text>
</comment>
<comment type="subunit">
    <text evidence="1">Homodimer.</text>
</comment>
<comment type="similarity">
    <text evidence="1">Belongs to the azoreductase type 1 family.</text>
</comment>
<name>AZOR_ECOUT</name>
<dbReference type="EC" id="1.6.5.-" evidence="1"/>
<dbReference type="EC" id="1.7.1.17" evidence="1"/>
<dbReference type="EMBL" id="CP000243">
    <property type="protein sequence ID" value="ABE07112.1"/>
    <property type="molecule type" value="Genomic_DNA"/>
</dbReference>
<dbReference type="RefSeq" id="WP_000048948.1">
    <property type="nucleotide sequence ID" value="NZ_CP064825.1"/>
</dbReference>
<dbReference type="SMR" id="Q1RC02"/>
<dbReference type="GeneID" id="93775555"/>
<dbReference type="KEGG" id="eci:UTI89_C1634"/>
<dbReference type="HOGENOM" id="CLU_088964_0_0_6"/>
<dbReference type="Proteomes" id="UP000001952">
    <property type="component" value="Chromosome"/>
</dbReference>
<dbReference type="GO" id="GO:0009055">
    <property type="term" value="F:electron transfer activity"/>
    <property type="evidence" value="ECO:0007669"/>
    <property type="project" value="UniProtKB-UniRule"/>
</dbReference>
<dbReference type="GO" id="GO:0010181">
    <property type="term" value="F:FMN binding"/>
    <property type="evidence" value="ECO:0007669"/>
    <property type="project" value="UniProtKB-UniRule"/>
</dbReference>
<dbReference type="GO" id="GO:0016652">
    <property type="term" value="F:oxidoreductase activity, acting on NAD(P)H as acceptor"/>
    <property type="evidence" value="ECO:0007669"/>
    <property type="project" value="UniProtKB-UniRule"/>
</dbReference>
<dbReference type="GO" id="GO:0016655">
    <property type="term" value="F:oxidoreductase activity, acting on NAD(P)H, quinone or similar compound as acceptor"/>
    <property type="evidence" value="ECO:0007669"/>
    <property type="project" value="InterPro"/>
</dbReference>
<dbReference type="FunFam" id="3.40.50.360:FF:000010">
    <property type="entry name" value="FMN-dependent NADH-azoreductase"/>
    <property type="match status" value="1"/>
</dbReference>
<dbReference type="Gene3D" id="3.40.50.360">
    <property type="match status" value="1"/>
</dbReference>
<dbReference type="HAMAP" id="MF_01216">
    <property type="entry name" value="Azoreductase_type1"/>
    <property type="match status" value="1"/>
</dbReference>
<dbReference type="InterPro" id="IPR003680">
    <property type="entry name" value="Flavodoxin_fold"/>
</dbReference>
<dbReference type="InterPro" id="IPR029039">
    <property type="entry name" value="Flavoprotein-like_sf"/>
</dbReference>
<dbReference type="InterPro" id="IPR050104">
    <property type="entry name" value="FMN-dep_NADH:Q_OxRdtase_AzoR1"/>
</dbReference>
<dbReference type="InterPro" id="IPR023048">
    <property type="entry name" value="NADH:quinone_OxRdtase_FMN_depd"/>
</dbReference>
<dbReference type="PANTHER" id="PTHR43741">
    <property type="entry name" value="FMN-DEPENDENT NADH-AZOREDUCTASE 1"/>
    <property type="match status" value="1"/>
</dbReference>
<dbReference type="PANTHER" id="PTHR43741:SF2">
    <property type="entry name" value="FMN-DEPENDENT NADH:QUINONE OXIDOREDUCTASE"/>
    <property type="match status" value="1"/>
</dbReference>
<dbReference type="Pfam" id="PF02525">
    <property type="entry name" value="Flavodoxin_2"/>
    <property type="match status" value="1"/>
</dbReference>
<dbReference type="SUPFAM" id="SSF52218">
    <property type="entry name" value="Flavoproteins"/>
    <property type="match status" value="1"/>
</dbReference>
<reference key="1">
    <citation type="journal article" date="2006" name="Proc. Natl. Acad. Sci. U.S.A.">
        <title>Identification of genes subject to positive selection in uropathogenic strains of Escherichia coli: a comparative genomics approach.</title>
        <authorList>
            <person name="Chen S.L."/>
            <person name="Hung C.-S."/>
            <person name="Xu J."/>
            <person name="Reigstad C.S."/>
            <person name="Magrini V."/>
            <person name="Sabo A."/>
            <person name="Blasiar D."/>
            <person name="Bieri T."/>
            <person name="Meyer R.R."/>
            <person name="Ozersky P."/>
            <person name="Armstrong J.R."/>
            <person name="Fulton R.S."/>
            <person name="Latreille J.P."/>
            <person name="Spieth J."/>
            <person name="Hooton T.M."/>
            <person name="Mardis E.R."/>
            <person name="Hultgren S.J."/>
            <person name="Gordon J.I."/>
        </authorList>
    </citation>
    <scope>NUCLEOTIDE SEQUENCE [LARGE SCALE GENOMIC DNA]</scope>
    <source>
        <strain>UTI89 / UPEC</strain>
    </source>
</reference>
<sequence>MSKVLVLKSSILAGYSQSNQLSDYFVEQWREKHSADEITVRDLAANPIPVLDGELVGALRPSDAPLTPRQQEALALSDELIAELKAHDVIVIAAPMYNFNISTQLKNYFDLVARAGVTFRYTENGPEGLVTGKKAIVITSRGGIHKDGPTDLVTPYLSTFLGFIGITDVKFVFAEGIAYGPEMAAKAQSDAKAAIDSIVAA</sequence>
<proteinExistence type="inferred from homology"/>
<gene>
    <name evidence="1" type="primary">azoR</name>
    <name type="ordered locus">UTI89_C1634</name>
</gene>
<feature type="chain" id="PRO_1000066506" description="FMN-dependent NADH:quinone oxidoreductase">
    <location>
        <begin position="1"/>
        <end position="201"/>
    </location>
</feature>
<feature type="binding site" evidence="1">
    <location>
        <position position="10"/>
    </location>
    <ligand>
        <name>FMN</name>
        <dbReference type="ChEBI" id="CHEBI:58210"/>
    </ligand>
</feature>
<feature type="binding site" evidence="1">
    <location>
        <begin position="16"/>
        <end position="18"/>
    </location>
    <ligand>
        <name>FMN</name>
        <dbReference type="ChEBI" id="CHEBI:58210"/>
    </ligand>
</feature>
<feature type="binding site" evidence="1">
    <location>
        <begin position="96"/>
        <end position="99"/>
    </location>
    <ligand>
        <name>FMN</name>
        <dbReference type="ChEBI" id="CHEBI:58210"/>
    </ligand>
</feature>
<feature type="binding site" evidence="1">
    <location>
        <begin position="140"/>
        <end position="143"/>
    </location>
    <ligand>
        <name>FMN</name>
        <dbReference type="ChEBI" id="CHEBI:58210"/>
    </ligand>
</feature>
<accession>Q1RC02</accession>